<evidence type="ECO:0000250" key="1"/>
<evidence type="ECO:0000255" key="2"/>
<evidence type="ECO:0000255" key="3">
    <source>
        <dbReference type="PROSITE-ProRule" id="PRU00081"/>
    </source>
</evidence>
<evidence type="ECO:0000256" key="4">
    <source>
        <dbReference type="SAM" id="MobiDB-lite"/>
    </source>
</evidence>
<evidence type="ECO:0000269" key="5">
    <source>
    </source>
</evidence>
<evidence type="ECO:0000305" key="6"/>
<evidence type="ECO:0007829" key="7">
    <source>
        <dbReference type="PDB" id="4BXW"/>
    </source>
</evidence>
<dbReference type="EMBL" id="AY576416">
    <property type="protein sequence ID" value="AAT78356.1"/>
    <property type="molecule type" value="mRNA"/>
</dbReference>
<dbReference type="RefSeq" id="XP_026578201.1">
    <property type="nucleotide sequence ID" value="XM_026722416.1"/>
</dbReference>
<dbReference type="PDB" id="4BXW">
    <property type="method" value="X-ray"/>
    <property type="resolution" value="2.71 A"/>
    <property type="chains" value="F=693-710"/>
</dbReference>
<dbReference type="PDBsum" id="4BXW"/>
<dbReference type="SMR" id="Q593B6"/>
<dbReference type="GlyCosmos" id="Q593B6">
    <property type="glycosylation" value="13 sites, No reported glycans"/>
</dbReference>
<dbReference type="GeneID" id="113451049"/>
<dbReference type="OrthoDB" id="2121828at2759"/>
<dbReference type="EvolutionaryTrace" id="Q593B6"/>
<dbReference type="Proteomes" id="UP000472273">
    <property type="component" value="Unplaced"/>
</dbReference>
<dbReference type="GO" id="GO:0005576">
    <property type="term" value="C:extracellular region"/>
    <property type="evidence" value="ECO:0007669"/>
    <property type="project" value="UniProtKB-SubCell"/>
</dbReference>
<dbReference type="GO" id="GO:0005886">
    <property type="term" value="C:plasma membrane"/>
    <property type="evidence" value="ECO:0007669"/>
    <property type="project" value="TreeGrafter"/>
</dbReference>
<dbReference type="GO" id="GO:0005507">
    <property type="term" value="F:copper ion binding"/>
    <property type="evidence" value="ECO:0007669"/>
    <property type="project" value="InterPro"/>
</dbReference>
<dbReference type="GO" id="GO:0016504">
    <property type="term" value="F:peptidase activator activity"/>
    <property type="evidence" value="ECO:0007669"/>
    <property type="project" value="UniProtKB-KW"/>
</dbReference>
<dbReference type="GO" id="GO:0038023">
    <property type="term" value="F:signaling receptor activity"/>
    <property type="evidence" value="ECO:0007669"/>
    <property type="project" value="TreeGrafter"/>
</dbReference>
<dbReference type="GO" id="GO:0090729">
    <property type="term" value="F:toxin activity"/>
    <property type="evidence" value="ECO:0007669"/>
    <property type="project" value="UniProtKB-KW"/>
</dbReference>
<dbReference type="GO" id="GO:0007596">
    <property type="term" value="P:blood coagulation"/>
    <property type="evidence" value="ECO:0007669"/>
    <property type="project" value="UniProtKB-KW"/>
</dbReference>
<dbReference type="CDD" id="cd04226">
    <property type="entry name" value="CuRO_1_FV_like"/>
    <property type="match status" value="1"/>
</dbReference>
<dbReference type="CDD" id="cd14453">
    <property type="entry name" value="CuRO_2_FV_like"/>
    <property type="match status" value="1"/>
</dbReference>
<dbReference type="CDD" id="cd14450">
    <property type="entry name" value="CuRO_3_FV_like"/>
    <property type="match status" value="1"/>
</dbReference>
<dbReference type="CDD" id="cd14454">
    <property type="entry name" value="CuRO_4_FV_like"/>
    <property type="match status" value="1"/>
</dbReference>
<dbReference type="CDD" id="cd14451">
    <property type="entry name" value="CuRO_5_FV_like"/>
    <property type="match status" value="1"/>
</dbReference>
<dbReference type="CDD" id="cd00057">
    <property type="entry name" value="FA58C"/>
    <property type="match status" value="2"/>
</dbReference>
<dbReference type="FunFam" id="2.60.40.420:FF:000056">
    <property type="entry name" value="Coagulation factor V"/>
    <property type="match status" value="1"/>
</dbReference>
<dbReference type="FunFam" id="2.60.40.420:FF:000050">
    <property type="entry name" value="coagulation factor V isoform X1"/>
    <property type="match status" value="1"/>
</dbReference>
<dbReference type="FunFam" id="2.60.40.420:FF:000068">
    <property type="entry name" value="coagulation factor V isoform X1"/>
    <property type="match status" value="1"/>
</dbReference>
<dbReference type="FunFam" id="2.60.120.260:FF:000002">
    <property type="entry name" value="Coagulation factor VIII"/>
    <property type="match status" value="2"/>
</dbReference>
<dbReference type="FunFam" id="2.60.40.420:FF:000011">
    <property type="entry name" value="Coagulation factor VIII (Predicted)"/>
    <property type="match status" value="2"/>
</dbReference>
<dbReference type="Gene3D" id="2.60.40.420">
    <property type="entry name" value="Cupredoxins - blue copper proteins"/>
    <property type="match status" value="5"/>
</dbReference>
<dbReference type="Gene3D" id="2.60.120.260">
    <property type="entry name" value="Galactose-binding domain-like"/>
    <property type="match status" value="2"/>
</dbReference>
<dbReference type="InterPro" id="IPR011707">
    <property type="entry name" value="Cu-oxidase-like_N"/>
</dbReference>
<dbReference type="InterPro" id="IPR033138">
    <property type="entry name" value="Cu_oxidase_CS"/>
</dbReference>
<dbReference type="InterPro" id="IPR008972">
    <property type="entry name" value="Cupredoxin"/>
</dbReference>
<dbReference type="InterPro" id="IPR000421">
    <property type="entry name" value="FA58C"/>
</dbReference>
<dbReference type="InterPro" id="IPR024715">
    <property type="entry name" value="Factor_5/8-like"/>
</dbReference>
<dbReference type="InterPro" id="IPR008979">
    <property type="entry name" value="Galactose-bd-like_sf"/>
</dbReference>
<dbReference type="InterPro" id="IPR050633">
    <property type="entry name" value="Neuropilin_MCO_CoagFactor"/>
</dbReference>
<dbReference type="PANTHER" id="PTHR46806:SF10">
    <property type="entry name" value="COAGULATION FACTOR V"/>
    <property type="match status" value="1"/>
</dbReference>
<dbReference type="PANTHER" id="PTHR46806">
    <property type="entry name" value="F5/8 TYPE C DOMAIN-CONTAINING PROTEIN"/>
    <property type="match status" value="1"/>
</dbReference>
<dbReference type="Pfam" id="PF07732">
    <property type="entry name" value="Cu-oxidase_3"/>
    <property type="match status" value="3"/>
</dbReference>
<dbReference type="Pfam" id="PF00754">
    <property type="entry name" value="F5_F8_type_C"/>
    <property type="match status" value="2"/>
</dbReference>
<dbReference type="PIRSF" id="PIRSF000354">
    <property type="entry name" value="Factors_V_VIII"/>
    <property type="match status" value="1"/>
</dbReference>
<dbReference type="SMART" id="SM00231">
    <property type="entry name" value="FA58C"/>
    <property type="match status" value="2"/>
</dbReference>
<dbReference type="SUPFAM" id="SSF49503">
    <property type="entry name" value="Cupredoxins"/>
    <property type="match status" value="6"/>
</dbReference>
<dbReference type="SUPFAM" id="SSF49785">
    <property type="entry name" value="Galactose-binding domain-like"/>
    <property type="match status" value="2"/>
</dbReference>
<dbReference type="PROSITE" id="PS01285">
    <property type="entry name" value="FA58C_1"/>
    <property type="match status" value="2"/>
</dbReference>
<dbReference type="PROSITE" id="PS01286">
    <property type="entry name" value="FA58C_2"/>
    <property type="match status" value="1"/>
</dbReference>
<dbReference type="PROSITE" id="PS50022">
    <property type="entry name" value="FA58C_3"/>
    <property type="match status" value="2"/>
</dbReference>
<dbReference type="PROSITE" id="PS00079">
    <property type="entry name" value="MULTICOPPER_OXIDASE1"/>
    <property type="match status" value="3"/>
</dbReference>
<accession>Q593B6</accession>
<protein>
    <recommendedName>
        <fullName>Coagulation factor V</fullName>
    </recommendedName>
    <component>
        <recommendedName>
            <fullName>Coagulation factor V heavy chain</fullName>
        </recommendedName>
    </component>
    <component>
        <recommendedName>
            <fullName>Coagulation factor V light chain</fullName>
        </recommendedName>
    </component>
</protein>
<sequence>MGRYSVSPVPKCLLLMFLGWSGLKYYEVNAAQLREYHIAAQLEDWDYNPQPEELSRLSESDLTFKKIVYREYELDFKQEKPRDELSGLLGPTLRGEVGDILIIYFKNFATQPVSIHPQSAVYNKWSEGSSYSDGTSDVERLDDAVPPGQSFKYVWNITAEIGPKKADPPCLTYAYYSHVNMVRDFNSGLIGALLICKEGSLNANGSQKFFNREYVLMFSVFDESKNWYRKPSLQYTINGFANGTLPDVQACAYDHISWHLIGMSSSPEIFSVHFNGQTLEQNHYKVSTINLVGGASVTANMSVSRTGKWLISSLVAKHLQAGMYGYLNIKDCGNPDTLTRKLSFRELRRIMNWEYFIAAEEITWDYAPEIPSSVDRRYKAQYLDNFSNFIGKKYKKAVFRQYKDSNFTKPTYAIWPKERGILGPVIRAKVRDTISIVFKNLASRPYSIYVHGVSVSKDAEGAIYPSDPKENITHGKAVEPGQVYTYKWTVLDTDEPTVKDSECITKLYHSAVDMTRDIASGLIGPLLVCKHKALSVKGVQNKADVEQHAVFAVFDENKSWYLEDNIKKYCSNPSTVKKDDPKFYKSNVMYTLNGYASDRTEVLGFHQSEVVEWHLTSVGTVDEIVPVHLSGHTFLSKGKHQDILNLFPMSGESATVTMDNLGTWLLSSWGSCEMSNGMRLRFLDANYDDEDEGNEEEEEDDGDIFADIFIPPEVVKKKEKDPVNFVSDPESDKIAKELGLLDDEDNQEESHNVQTEDDEEQLMIATMLGFRSFKGSVAEEELNLTALALEEDAHASDPRIDSNSARNPDDIAGRYLRTINRGNKRRYYIAAEEVLWDYSPIGKSQVRSRAAKTTFKKAIFRSYLDDTFQTPSTGGEYEKHLGILGPIIRAEVDDVIEVQFRNLASRPYSLHAHGLLYEKSSEGRSYDDKSPELFKKDDAIMPNGTYTYVWQVPPRSGPTDNTEKCKSWAYYSGVNPEKDIHSGLIGPILICQKGMIDKYNRTIDIREFVLFFMVFDEEKSWYFPKSDKSTRAEKLIGVQSRHTFPAINGIPYQLQGLTMYKDENVHWHLLNMGGPKDIHVVNFHGQTFTEEGREDNQLGVLPLLPGTFASIKMKPSKIGTWLLETEVGENQERGMQALFTVIDKDCKLPMGLASGIIQDSQISASGHVGYWEPKLARLNNTGKYNAWSIIKKEHEHPWIQIDLQRQVVITGIQTQGAMQLLKHLYTVEYFFTYSKDGQNWITFKGRHSETQMHFEGNSDGTTVKENHIDPPIIARYIRLHPTKFHNRPTFRIELLGCEVEGCSVPLGMESGAIKNSEITASSYKKTWWSSWEPSLARLNLKGRTNAWQPKVNNKDQWLQIDLQHLTKITSIITQGATSMTTSMYVKTFSIHYTDDNSTWKPYLDVRTSMEKVFTGNINSDGHVKHFFKPPILSRFIRIIPKTWNQYIALRIELFGCEVF</sequence>
<organism>
    <name type="scientific">Pseudonaja textilis</name>
    <name type="common">Eastern brown snake</name>
    <dbReference type="NCBI Taxonomy" id="8673"/>
    <lineage>
        <taxon>Eukaryota</taxon>
        <taxon>Metazoa</taxon>
        <taxon>Chordata</taxon>
        <taxon>Craniata</taxon>
        <taxon>Vertebrata</taxon>
        <taxon>Euteleostomi</taxon>
        <taxon>Lepidosauria</taxon>
        <taxon>Squamata</taxon>
        <taxon>Bifurcata</taxon>
        <taxon>Unidentata</taxon>
        <taxon>Episquamata</taxon>
        <taxon>Toxicofera</taxon>
        <taxon>Serpentes</taxon>
        <taxon>Colubroidea</taxon>
        <taxon>Elapidae</taxon>
        <taxon>Hydrophiinae</taxon>
        <taxon>Pseudonaja</taxon>
    </lineage>
</organism>
<name>FA5_PSETE</name>
<proteinExistence type="evidence at protein level"/>
<feature type="signal peptide" evidence="1">
    <location>
        <begin position="1"/>
        <end position="30"/>
    </location>
</feature>
<feature type="chain" id="PRO_0000409910" description="Coagulation factor V">
    <location>
        <begin position="31"/>
        <end position="1459"/>
    </location>
</feature>
<feature type="chain" id="PRO_0000409911" description="Coagulation factor V heavy chain">
    <location>
        <begin position="31"/>
        <end position="771"/>
    </location>
</feature>
<feature type="propeptide" id="PRO_0000409912" description="Activation peptide (connecting region)" evidence="1">
    <location>
        <begin position="772"/>
        <end position="817"/>
    </location>
</feature>
<feature type="chain" id="PRO_0000409913" description="Coagulation factor V light chain">
    <location>
        <begin position="818"/>
        <end position="1459"/>
    </location>
</feature>
<feature type="domain" description="F5/8 type A 1">
    <location>
        <begin position="32"/>
        <end position="330"/>
    </location>
</feature>
<feature type="domain" description="Plastocyanin-like 1">
    <location>
        <begin position="32"/>
        <end position="196"/>
    </location>
</feature>
<feature type="domain" description="Plastocyanin-like 2">
    <location>
        <begin position="206"/>
        <end position="330"/>
    </location>
</feature>
<feature type="domain" description="F5/8 type A 2">
    <location>
        <begin position="351"/>
        <end position="685"/>
    </location>
</feature>
<feature type="domain" description="Plastocyanin-like 3">
    <location>
        <begin position="351"/>
        <end position="529"/>
    </location>
</feature>
<feature type="domain" description="Plastocyanin-like 4">
    <location>
        <begin position="539"/>
        <end position="685"/>
    </location>
</feature>
<feature type="domain" description="F5/8 type A 3">
    <location>
        <begin position="823"/>
        <end position="1142"/>
    </location>
</feature>
<feature type="domain" description="Plastocyanin-like 5">
    <location>
        <begin position="823"/>
        <end position="991"/>
    </location>
</feature>
<feature type="domain" description="Plastocyanin-like 6">
    <location>
        <begin position="1000"/>
        <end position="1142"/>
    </location>
</feature>
<feature type="domain" description="F5/8 type C 1" evidence="3">
    <location>
        <begin position="1146"/>
        <end position="1297"/>
    </location>
</feature>
<feature type="domain" description="F5/8 type C 2" evidence="3">
    <location>
        <begin position="1302"/>
        <end position="1456"/>
    </location>
</feature>
<feature type="region of interest" description="B">
    <location>
        <begin position="693"/>
        <end position="817"/>
    </location>
</feature>
<feature type="region of interest" description="Disordered" evidence="4">
    <location>
        <begin position="739"/>
        <end position="758"/>
    </location>
</feature>
<feature type="binding site" evidence="1">
    <location>
        <position position="142"/>
    </location>
    <ligand>
        <name>Ca(2+)</name>
        <dbReference type="ChEBI" id="CHEBI:29108"/>
    </ligand>
</feature>
<feature type="binding site" evidence="1">
    <location>
        <position position="143"/>
    </location>
    <ligand>
        <name>Ca(2+)</name>
        <dbReference type="ChEBI" id="CHEBI:29108"/>
    </ligand>
</feature>
<feature type="site" description="Cleavage; by activated protein C" evidence="1">
    <location>
        <begin position="348"/>
        <end position="349"/>
    </location>
</feature>
<feature type="site" description="Cleavage; by FXa" evidence="1">
    <location>
        <begin position="377"/>
        <end position="378"/>
    </location>
</feature>
<feature type="site" description="Cleavage; by FXa" evidence="1">
    <location>
        <begin position="379"/>
        <end position="380"/>
    </location>
</feature>
<feature type="site" description="Cleavage; by activated protein C" evidence="1">
    <location>
        <begin position="537"/>
        <end position="538"/>
    </location>
</feature>
<feature type="site" description="Cleavage; by thrombin and FXa" evidence="1">
    <location>
        <begin position="771"/>
        <end position="772"/>
    </location>
</feature>
<feature type="site" description="Cleavage; by thrombin" evidence="1">
    <location>
        <begin position="817"/>
        <end position="818"/>
    </location>
</feature>
<feature type="site" description="Cleavage; by FXa" evidence="1">
    <location>
        <begin position="1034"/>
        <end position="1035"/>
    </location>
</feature>
<feature type="glycosylation site" description="N-linked (GlcNAc...) asparagine" evidence="2">
    <location>
        <position position="156"/>
    </location>
</feature>
<feature type="glycosylation site" description="N-linked (GlcNAc...) asparagine" evidence="2">
    <location>
        <position position="204"/>
    </location>
</feature>
<feature type="glycosylation site" description="N-linked (GlcNAc...) asparagine" evidence="2">
    <location>
        <position position="242"/>
    </location>
</feature>
<feature type="glycosylation site" description="N-linked (GlcNAc...) asparagine" evidence="2">
    <location>
        <position position="300"/>
    </location>
</feature>
<feature type="glycosylation site" description="N-linked (GlcNAc...) asparagine" evidence="2">
    <location>
        <position position="385"/>
    </location>
</feature>
<feature type="glycosylation site" description="N-linked (GlcNAc...) asparagine" evidence="2">
    <location>
        <position position="406"/>
    </location>
</feature>
<feature type="glycosylation site" description="N-linked (GlcNAc...) asparagine" evidence="2">
    <location>
        <position position="471"/>
    </location>
</feature>
<feature type="glycosylation site" description="N-linked (GlcNAc...) asparagine" evidence="2">
    <location>
        <position position="557"/>
    </location>
</feature>
<feature type="glycosylation site" description="N-linked (GlcNAc...) asparagine" evidence="2">
    <location>
        <position position="783"/>
    </location>
</feature>
<feature type="glycosylation site" description="N-linked (GlcNAc...) asparagine" evidence="2">
    <location>
        <position position="943"/>
    </location>
</feature>
<feature type="glycosylation site" description="N-linked (GlcNAc...) asparagine" evidence="2">
    <location>
        <position position="1000"/>
    </location>
</feature>
<feature type="glycosylation site" description="N-linked (GlcNAc...) asparagine" evidence="2">
    <location>
        <position position="1179"/>
    </location>
</feature>
<feature type="glycosylation site" description="N-linked (GlcNAc...) asparagine" evidence="2">
    <location>
        <position position="1396"/>
    </location>
</feature>
<feature type="disulfide bond" evidence="3">
    <location>
        <begin position="170"/>
        <end position="196"/>
    </location>
</feature>
<feature type="disulfide bond" evidence="3">
    <location>
        <begin position="251"/>
        <end position="332"/>
    </location>
</feature>
<feature type="disulfide bond" evidence="3">
    <location>
        <begin position="503"/>
        <end position="529"/>
    </location>
</feature>
<feature type="disulfide bond" evidence="3">
    <location>
        <begin position="965"/>
        <end position="991"/>
    </location>
</feature>
<feature type="disulfide bond" evidence="3">
    <location>
        <begin position="1146"/>
        <end position="1297"/>
    </location>
</feature>
<feature type="disulfide bond" evidence="3">
    <location>
        <begin position="1302"/>
        <end position="1456"/>
    </location>
</feature>
<feature type="strand" evidence="7">
    <location>
        <begin position="706"/>
        <end position="710"/>
    </location>
</feature>
<gene>
    <name type="primary">F5</name>
</gene>
<reference key="1">
    <citation type="journal article" date="2005" name="Thromb. Haemost.">
        <title>Gene duplication of coagulation factor V and origin of venom prothrombin activator in Pseudonaja textilis snake.</title>
        <authorList>
            <person name="Minh Le T.N."/>
            <person name="Reza M.A."/>
            <person name="Swarup S."/>
            <person name="Kini R.M."/>
        </authorList>
    </citation>
    <scope>NUCLEOTIDE SEQUENCE [MRNA]</scope>
    <scope>TISSUE SPECIFICITY</scope>
    <source>
        <tissue>Liver</tissue>
    </source>
</reference>
<comment type="function">
    <text evidence="1">Central regulator of hemostasis. It serves as a critical cofactor for the prothrombinase activity of factor Xa that results in the activation of prothrombin to thrombin (By similarity).</text>
</comment>
<comment type="subunit">
    <text evidence="1">Heterodimer of a light and a heavy chains; non-disulfide-linked. The interaction between the two chains is calcium-dependent (By similarity).</text>
</comment>
<comment type="subcellular location">
    <subcellularLocation>
        <location evidence="1">Secreted</location>
    </subcellularLocation>
</comment>
<comment type="tissue specificity">
    <text evidence="5">Plasma; synthesized in the liver.</text>
</comment>
<comment type="PTM">
    <text>Thrombin activates factor V proteolytically to the active cofactor, factor Va (formation of a heavy chain at the N-terminus and a light chain at the C-terminus).</text>
</comment>
<comment type="PTM">
    <text evidence="1">Activated protein C inactivates factor V and factor Va by proteolytic degradation.</text>
</comment>
<comment type="similarity">
    <text evidence="6">Belongs to the multicopper oxidase family.</text>
</comment>
<keyword id="KW-0002">3D-structure</keyword>
<keyword id="KW-0094">Blood coagulation</keyword>
<keyword id="KW-0106">Calcium</keyword>
<keyword id="KW-0186">Copper</keyword>
<keyword id="KW-1015">Disulfide bond</keyword>
<keyword id="KW-0325">Glycoprotein</keyword>
<keyword id="KW-0356">Hemostasis</keyword>
<keyword id="KW-0479">Metal-binding</keyword>
<keyword id="KW-0597">Phosphoprotein</keyword>
<keyword id="KW-0655">Prothrombin activator</keyword>
<keyword id="KW-1185">Reference proteome</keyword>
<keyword id="KW-0677">Repeat</keyword>
<keyword id="KW-0964">Secreted</keyword>
<keyword id="KW-0732">Signal</keyword>
<keyword id="KW-0800">Toxin</keyword>
<keyword id="KW-0865">Zymogen</keyword>